<feature type="chain" id="PRO_1000015528" description="Deoxyuridine 5'-triphosphate nucleotidohydrolase">
    <location>
        <begin position="1"/>
        <end position="151"/>
    </location>
</feature>
<feature type="binding site" evidence="1">
    <location>
        <begin position="70"/>
        <end position="72"/>
    </location>
    <ligand>
        <name>substrate</name>
    </ligand>
</feature>
<feature type="binding site" evidence="1">
    <location>
        <position position="83"/>
    </location>
    <ligand>
        <name>substrate</name>
    </ligand>
</feature>
<feature type="binding site" evidence="1">
    <location>
        <begin position="87"/>
        <end position="89"/>
    </location>
    <ligand>
        <name>substrate</name>
    </ligand>
</feature>
<feature type="binding site" evidence="1">
    <location>
        <position position="97"/>
    </location>
    <ligand>
        <name>substrate</name>
    </ligand>
</feature>
<gene>
    <name evidence="1" type="primary">dut</name>
    <name type="ordered locus">YE0061</name>
</gene>
<keyword id="KW-0378">Hydrolase</keyword>
<keyword id="KW-0460">Magnesium</keyword>
<keyword id="KW-0479">Metal-binding</keyword>
<keyword id="KW-0546">Nucleotide metabolism</keyword>
<sequence length="151" mass="16176">MKKIDIKILDPRVGNEFPLPTYATEGSAGLDLRACLSEAVDLLPGQTTLLPTGLAIHIGDSSLAAVILPRSGLGHKHGVVLGNLVGLIDSDYQGQLMVSVWNRGQQPFTIEPGERIAQMVFVPVIQAEFNLVEDFDLSERGTGGFGHSGRQ</sequence>
<proteinExistence type="inferred from homology"/>
<name>DUT_YERE8</name>
<protein>
    <recommendedName>
        <fullName evidence="1">Deoxyuridine 5'-triphosphate nucleotidohydrolase</fullName>
        <shortName evidence="1">dUTPase</shortName>
        <ecNumber evidence="1">3.6.1.23</ecNumber>
    </recommendedName>
    <alternativeName>
        <fullName evidence="1">dUTP pyrophosphatase</fullName>
    </alternativeName>
</protein>
<comment type="function">
    <text evidence="1">This enzyme is involved in nucleotide metabolism: it produces dUMP, the immediate precursor of thymidine nucleotides and it decreases the intracellular concentration of dUTP so that uracil cannot be incorporated into DNA.</text>
</comment>
<comment type="catalytic activity">
    <reaction evidence="1">
        <text>dUTP + H2O = dUMP + diphosphate + H(+)</text>
        <dbReference type="Rhea" id="RHEA:10248"/>
        <dbReference type="ChEBI" id="CHEBI:15377"/>
        <dbReference type="ChEBI" id="CHEBI:15378"/>
        <dbReference type="ChEBI" id="CHEBI:33019"/>
        <dbReference type="ChEBI" id="CHEBI:61555"/>
        <dbReference type="ChEBI" id="CHEBI:246422"/>
        <dbReference type="EC" id="3.6.1.23"/>
    </reaction>
</comment>
<comment type="cofactor">
    <cofactor evidence="1">
        <name>Mg(2+)</name>
        <dbReference type="ChEBI" id="CHEBI:18420"/>
    </cofactor>
</comment>
<comment type="pathway">
    <text evidence="1">Pyrimidine metabolism; dUMP biosynthesis; dUMP from dCTP (dUTP route): step 2/2.</text>
</comment>
<comment type="similarity">
    <text evidence="1">Belongs to the dUTPase family.</text>
</comment>
<organism>
    <name type="scientific">Yersinia enterocolitica serotype O:8 / biotype 1B (strain NCTC 13174 / 8081)</name>
    <dbReference type="NCBI Taxonomy" id="393305"/>
    <lineage>
        <taxon>Bacteria</taxon>
        <taxon>Pseudomonadati</taxon>
        <taxon>Pseudomonadota</taxon>
        <taxon>Gammaproteobacteria</taxon>
        <taxon>Enterobacterales</taxon>
        <taxon>Yersiniaceae</taxon>
        <taxon>Yersinia</taxon>
    </lineage>
</organism>
<accession>A1JHX0</accession>
<evidence type="ECO:0000255" key="1">
    <source>
        <dbReference type="HAMAP-Rule" id="MF_00116"/>
    </source>
</evidence>
<reference key="1">
    <citation type="journal article" date="2006" name="PLoS Genet.">
        <title>The complete genome sequence and comparative genome analysis of the high pathogenicity Yersinia enterocolitica strain 8081.</title>
        <authorList>
            <person name="Thomson N.R."/>
            <person name="Howard S."/>
            <person name="Wren B.W."/>
            <person name="Holden M.T.G."/>
            <person name="Crossman L."/>
            <person name="Challis G.L."/>
            <person name="Churcher C."/>
            <person name="Mungall K."/>
            <person name="Brooks K."/>
            <person name="Chillingworth T."/>
            <person name="Feltwell T."/>
            <person name="Abdellah Z."/>
            <person name="Hauser H."/>
            <person name="Jagels K."/>
            <person name="Maddison M."/>
            <person name="Moule S."/>
            <person name="Sanders M."/>
            <person name="Whitehead S."/>
            <person name="Quail M.A."/>
            <person name="Dougan G."/>
            <person name="Parkhill J."/>
            <person name="Prentice M.B."/>
        </authorList>
    </citation>
    <scope>NUCLEOTIDE SEQUENCE [LARGE SCALE GENOMIC DNA]</scope>
    <source>
        <strain>NCTC 13174 / 8081</strain>
    </source>
</reference>
<dbReference type="EC" id="3.6.1.23" evidence="1"/>
<dbReference type="EMBL" id="AM286415">
    <property type="protein sequence ID" value="CAL10203.1"/>
    <property type="molecule type" value="Genomic_DNA"/>
</dbReference>
<dbReference type="RefSeq" id="YP_001004455.1">
    <property type="nucleotide sequence ID" value="NC_008800.1"/>
</dbReference>
<dbReference type="SMR" id="A1JHX0"/>
<dbReference type="KEGG" id="yen:YE0061"/>
<dbReference type="PATRIC" id="fig|393305.7.peg.149"/>
<dbReference type="eggNOG" id="COG0756">
    <property type="taxonomic scope" value="Bacteria"/>
</dbReference>
<dbReference type="HOGENOM" id="CLU_068508_1_1_6"/>
<dbReference type="OrthoDB" id="9809956at2"/>
<dbReference type="UniPathway" id="UPA00610">
    <property type="reaction ID" value="UER00666"/>
</dbReference>
<dbReference type="Proteomes" id="UP000000642">
    <property type="component" value="Chromosome"/>
</dbReference>
<dbReference type="GO" id="GO:0004170">
    <property type="term" value="F:dUTP diphosphatase activity"/>
    <property type="evidence" value="ECO:0007669"/>
    <property type="project" value="UniProtKB-UniRule"/>
</dbReference>
<dbReference type="GO" id="GO:0000287">
    <property type="term" value="F:magnesium ion binding"/>
    <property type="evidence" value="ECO:0007669"/>
    <property type="project" value="UniProtKB-UniRule"/>
</dbReference>
<dbReference type="GO" id="GO:0006226">
    <property type="term" value="P:dUMP biosynthetic process"/>
    <property type="evidence" value="ECO:0007669"/>
    <property type="project" value="UniProtKB-UniRule"/>
</dbReference>
<dbReference type="GO" id="GO:0046081">
    <property type="term" value="P:dUTP catabolic process"/>
    <property type="evidence" value="ECO:0007669"/>
    <property type="project" value="InterPro"/>
</dbReference>
<dbReference type="CDD" id="cd07557">
    <property type="entry name" value="trimeric_dUTPase"/>
    <property type="match status" value="1"/>
</dbReference>
<dbReference type="FunFam" id="2.70.40.10:FF:000002">
    <property type="entry name" value="dUTP diphosphatase"/>
    <property type="match status" value="1"/>
</dbReference>
<dbReference type="Gene3D" id="2.70.40.10">
    <property type="match status" value="1"/>
</dbReference>
<dbReference type="HAMAP" id="MF_00116">
    <property type="entry name" value="dUTPase_bact"/>
    <property type="match status" value="1"/>
</dbReference>
<dbReference type="InterPro" id="IPR008181">
    <property type="entry name" value="dUTPase"/>
</dbReference>
<dbReference type="InterPro" id="IPR029054">
    <property type="entry name" value="dUTPase-like"/>
</dbReference>
<dbReference type="InterPro" id="IPR036157">
    <property type="entry name" value="dUTPase-like_sf"/>
</dbReference>
<dbReference type="InterPro" id="IPR033704">
    <property type="entry name" value="dUTPase_trimeric"/>
</dbReference>
<dbReference type="NCBIfam" id="TIGR00576">
    <property type="entry name" value="dut"/>
    <property type="match status" value="1"/>
</dbReference>
<dbReference type="NCBIfam" id="NF001862">
    <property type="entry name" value="PRK00601.1"/>
    <property type="match status" value="1"/>
</dbReference>
<dbReference type="PANTHER" id="PTHR11241">
    <property type="entry name" value="DEOXYURIDINE 5'-TRIPHOSPHATE NUCLEOTIDOHYDROLASE"/>
    <property type="match status" value="1"/>
</dbReference>
<dbReference type="PANTHER" id="PTHR11241:SF0">
    <property type="entry name" value="DEOXYURIDINE 5'-TRIPHOSPHATE NUCLEOTIDOHYDROLASE"/>
    <property type="match status" value="1"/>
</dbReference>
<dbReference type="Pfam" id="PF00692">
    <property type="entry name" value="dUTPase"/>
    <property type="match status" value="1"/>
</dbReference>
<dbReference type="SUPFAM" id="SSF51283">
    <property type="entry name" value="dUTPase-like"/>
    <property type="match status" value="1"/>
</dbReference>